<proteinExistence type="evidence at protein level"/>
<sequence>MSIWMEGFKAVRTLNAAGFEAYIVGGAVRDYLLGKDVDDVDIATQASPHQVADIFTKGVHINQEHKTVLIPGEKGPIEITTYKGETLAEDLQKRDFTINALAMTETREVIDPYGGRQDLQKRLLRSYDAQKRLSEDPLRMLRAARFISSLGFEADRQLVKETTVQKAALQRCARERVVVELEKLLKGMETEAAFAFLQETGAIHSLPGIQITDSQLAELMRLPKQQWDSGDRAWLEFAICTGGPSSMAALPLPKKRKQLVAAGLKAFEYRQTQQRWSDWQLYISGLAIAMQIEEIRAGRQLPSIQKEELAEQWSALPIKAKSDLAITGRDLLHAKAAPGPWMKEALQAAEKAVVTKKCPNEKAAILAFLTMREDGK</sequence>
<comment type="function">
    <text evidence="2">tRNA nucleotidyltransferase involved in the synthesis of the tRNA CCA terminus. Adds the two cytidine residues to tRNA.</text>
</comment>
<comment type="catalytic activity">
    <reaction evidence="2">
        <text>a tRNA precursor + 2 CTP = a tRNA with a 3' CC end + 2 diphosphate</text>
        <dbReference type="Rhea" id="RHEA:60008"/>
        <dbReference type="Rhea" id="RHEA-COMP:10465"/>
        <dbReference type="Rhea" id="RHEA-COMP:15488"/>
        <dbReference type="ChEBI" id="CHEBI:33019"/>
        <dbReference type="ChEBI" id="CHEBI:37563"/>
        <dbReference type="ChEBI" id="CHEBI:74896"/>
        <dbReference type="ChEBI" id="CHEBI:83069"/>
    </reaction>
    <physiologicalReaction direction="left-to-right" evidence="2">
        <dbReference type="Rhea" id="RHEA:60009"/>
    </physiologicalReaction>
</comment>
<comment type="cofactor">
    <cofactor evidence="1">
        <name>Mg(2+)</name>
        <dbReference type="ChEBI" id="CHEBI:18420"/>
    </cofactor>
</comment>
<comment type="similarity">
    <text evidence="4">Belongs to the tRNA nucleotidyltransferase/poly(A) polymerase family.</text>
</comment>
<keyword id="KW-0460">Magnesium</keyword>
<keyword id="KW-0479">Metal-binding</keyword>
<keyword id="KW-0547">Nucleotide-binding</keyword>
<keyword id="KW-0548">Nucleotidyltransferase</keyword>
<keyword id="KW-1185">Reference proteome</keyword>
<keyword id="KW-0694">RNA-binding</keyword>
<keyword id="KW-0808">Transferase</keyword>
<keyword id="KW-0819">tRNA processing</keyword>
<keyword id="KW-0820">tRNA-binding</keyword>
<protein>
    <recommendedName>
        <fullName evidence="4">CC-adding tRNA nucleotidyltransferase</fullName>
        <shortName evidence="4">C-adding TNT</shortName>
        <ecNumber evidence="2">2.7.7.-</ecNumber>
    </recommendedName>
    <alternativeName>
        <fullName evidence="3">CC-adding enzyme</fullName>
    </alternativeName>
</protein>
<gene>
    <name type="ordered locus">ABC2069</name>
</gene>
<accession>Q5WGA1</accession>
<reference key="1">
    <citation type="submission" date="2003-10" db="EMBL/GenBank/DDBJ databases">
        <title>The complete genome sequence of the alkaliphilic Bacillus clausii KSM-K16.</title>
        <authorList>
            <person name="Takaki Y."/>
            <person name="Kageyama Y."/>
            <person name="Shimamura S."/>
            <person name="Suzuki H."/>
            <person name="Nishi S."/>
            <person name="Hatada Y."/>
            <person name="Kawai S."/>
            <person name="Ito S."/>
            <person name="Horikoshi K."/>
        </authorList>
    </citation>
    <scope>NUCLEOTIDE SEQUENCE [LARGE SCALE GENOMIC DNA]</scope>
    <source>
        <strain>KSM-K16</strain>
    </source>
</reference>
<reference key="2">
    <citation type="journal article" date="2008" name="Proc. Natl. Acad. Sci. U.S.A.">
        <title>Evolution of tRNA nucleotidyltransferases: a small deletion generated CC-adding enzymes.</title>
        <authorList>
            <person name="Neuenfeldt A."/>
            <person name="Just A."/>
            <person name="Betat H."/>
            <person name="Moerl M."/>
        </authorList>
    </citation>
    <scope>FUNCTION</scope>
    <scope>CATALYTIC ACTIVITY</scope>
    <source>
        <strain>DSM 8716</strain>
    </source>
</reference>
<organism>
    <name type="scientific">Shouchella clausii (strain KSM-K16)</name>
    <name type="common">Alkalihalobacillus clausii</name>
    <dbReference type="NCBI Taxonomy" id="66692"/>
    <lineage>
        <taxon>Bacteria</taxon>
        <taxon>Bacillati</taxon>
        <taxon>Bacillota</taxon>
        <taxon>Bacilli</taxon>
        <taxon>Bacillales</taxon>
        <taxon>Bacillaceae</taxon>
        <taxon>Shouchella</taxon>
    </lineage>
</organism>
<evidence type="ECO:0000250" key="1">
    <source>
        <dbReference type="UniProtKB" id="O67911"/>
    </source>
</evidence>
<evidence type="ECO:0000269" key="2">
    <source>
    </source>
</evidence>
<evidence type="ECO:0000303" key="3">
    <source>
    </source>
</evidence>
<evidence type="ECO:0000305" key="4"/>
<dbReference type="EC" id="2.7.7.-" evidence="2"/>
<dbReference type="EMBL" id="AP006627">
    <property type="protein sequence ID" value="BAD64604.1"/>
    <property type="molecule type" value="Genomic_DNA"/>
</dbReference>
<dbReference type="RefSeq" id="WP_011246912.1">
    <property type="nucleotide sequence ID" value="NC_006582.1"/>
</dbReference>
<dbReference type="SMR" id="Q5WGA1"/>
<dbReference type="STRING" id="66692.ABC2069"/>
<dbReference type="KEGG" id="bcl:ABC2069"/>
<dbReference type="eggNOG" id="COG0617">
    <property type="taxonomic scope" value="Bacteria"/>
</dbReference>
<dbReference type="HOGENOM" id="CLU_015961_3_0_9"/>
<dbReference type="OrthoDB" id="9805698at2"/>
<dbReference type="BRENDA" id="2.7.7.72">
    <property type="organism ID" value="7525"/>
</dbReference>
<dbReference type="Proteomes" id="UP000001168">
    <property type="component" value="Chromosome"/>
</dbReference>
<dbReference type="GO" id="GO:0052927">
    <property type="term" value="F:CC tRNA cytidylyltransferase activity"/>
    <property type="evidence" value="ECO:0007669"/>
    <property type="project" value="RHEA"/>
</dbReference>
<dbReference type="GO" id="GO:0046872">
    <property type="term" value="F:metal ion binding"/>
    <property type="evidence" value="ECO:0007669"/>
    <property type="project" value="UniProtKB-KW"/>
</dbReference>
<dbReference type="GO" id="GO:0000166">
    <property type="term" value="F:nucleotide binding"/>
    <property type="evidence" value="ECO:0007669"/>
    <property type="project" value="UniProtKB-KW"/>
</dbReference>
<dbReference type="GO" id="GO:0000049">
    <property type="term" value="F:tRNA binding"/>
    <property type="evidence" value="ECO:0007669"/>
    <property type="project" value="UniProtKB-KW"/>
</dbReference>
<dbReference type="GO" id="GO:0008033">
    <property type="term" value="P:tRNA processing"/>
    <property type="evidence" value="ECO:0007669"/>
    <property type="project" value="UniProtKB-KW"/>
</dbReference>
<dbReference type="CDD" id="cd05398">
    <property type="entry name" value="NT_ClassII-CCAase"/>
    <property type="match status" value="1"/>
</dbReference>
<dbReference type="Gene3D" id="1.10.110.30">
    <property type="match status" value="1"/>
</dbReference>
<dbReference type="Gene3D" id="1.10.246.80">
    <property type="match status" value="1"/>
</dbReference>
<dbReference type="Gene3D" id="1.20.58.560">
    <property type="match status" value="1"/>
</dbReference>
<dbReference type="Gene3D" id="3.30.460.10">
    <property type="entry name" value="Beta Polymerase, domain 2"/>
    <property type="match status" value="1"/>
</dbReference>
<dbReference type="InterPro" id="IPR050264">
    <property type="entry name" value="Bact_CCA-adding_enz_type3_sf"/>
</dbReference>
<dbReference type="InterPro" id="IPR032810">
    <property type="entry name" value="CCA-adding_enz_C"/>
</dbReference>
<dbReference type="InterPro" id="IPR043519">
    <property type="entry name" value="NT_sf"/>
</dbReference>
<dbReference type="InterPro" id="IPR002646">
    <property type="entry name" value="PolA_pol_head_dom"/>
</dbReference>
<dbReference type="InterPro" id="IPR032828">
    <property type="entry name" value="PolyA_RNA-bd"/>
</dbReference>
<dbReference type="NCBIfam" id="NF009814">
    <property type="entry name" value="PRK13299.1"/>
    <property type="match status" value="1"/>
</dbReference>
<dbReference type="PANTHER" id="PTHR46173">
    <property type="entry name" value="CCA TRNA NUCLEOTIDYLTRANSFERASE 1, MITOCHONDRIAL"/>
    <property type="match status" value="1"/>
</dbReference>
<dbReference type="PANTHER" id="PTHR46173:SF1">
    <property type="entry name" value="CCA TRNA NUCLEOTIDYLTRANSFERASE 1, MITOCHONDRIAL"/>
    <property type="match status" value="1"/>
</dbReference>
<dbReference type="Pfam" id="PF01743">
    <property type="entry name" value="PolyA_pol"/>
    <property type="match status" value="1"/>
</dbReference>
<dbReference type="Pfam" id="PF12627">
    <property type="entry name" value="PolyA_pol_RNAbd"/>
    <property type="match status" value="1"/>
</dbReference>
<dbReference type="Pfam" id="PF13735">
    <property type="entry name" value="tRNA_NucTran2_2"/>
    <property type="match status" value="1"/>
</dbReference>
<dbReference type="SUPFAM" id="SSF81301">
    <property type="entry name" value="Nucleotidyltransferase"/>
    <property type="match status" value="1"/>
</dbReference>
<dbReference type="SUPFAM" id="SSF81891">
    <property type="entry name" value="Poly A polymerase C-terminal region-like"/>
    <property type="match status" value="1"/>
</dbReference>
<feature type="chain" id="PRO_0000139032" description="CC-adding tRNA nucleotidyltransferase">
    <location>
        <begin position="1"/>
        <end position="376"/>
    </location>
</feature>
<feature type="binding site" evidence="1">
    <location>
        <begin position="26"/>
        <end position="29"/>
    </location>
    <ligand>
        <name>CTP</name>
        <dbReference type="ChEBI" id="CHEBI:37563"/>
    </ligand>
</feature>
<feature type="binding site" evidence="1">
    <location>
        <position position="39"/>
    </location>
    <ligand>
        <name>Mg(2+)</name>
        <dbReference type="ChEBI" id="CHEBI:18420"/>
    </ligand>
</feature>
<feature type="binding site" evidence="1">
    <location>
        <position position="41"/>
    </location>
    <ligand>
        <name>Mg(2+)</name>
        <dbReference type="ChEBI" id="CHEBI:18420"/>
    </ligand>
</feature>
<feature type="binding site" evidence="1">
    <location>
        <begin position="94"/>
        <end position="95"/>
    </location>
    <ligand>
        <name>CTP</name>
        <dbReference type="ChEBI" id="CHEBI:37563"/>
    </ligand>
</feature>
<feature type="binding site" evidence="1">
    <location>
        <position position="99"/>
    </location>
    <ligand>
        <name>CTP</name>
        <dbReference type="ChEBI" id="CHEBI:37563"/>
    </ligand>
</feature>
<feature type="binding site" evidence="1">
    <location>
        <begin position="136"/>
        <end position="145"/>
    </location>
    <ligand>
        <name>CTP</name>
        <dbReference type="ChEBI" id="CHEBI:37563"/>
    </ligand>
</feature>
<feature type="binding site" evidence="1">
    <location>
        <position position="176"/>
    </location>
    <ligand>
        <name>CTP</name>
        <dbReference type="ChEBI" id="CHEBI:37563"/>
    </ligand>
</feature>
<name>CATNT_SHOC1</name>